<keyword id="KW-0274">FAD</keyword>
<keyword id="KW-0285">Flavoprotein</keyword>
<keyword id="KW-0496">Mitochondrion</keyword>
<keyword id="KW-0560">Oxidoreductase</keyword>
<keyword id="KW-1185">Reference proteome</keyword>
<accession>Q68FT3</accession>
<dbReference type="EC" id="1.-.-.-"/>
<dbReference type="EMBL" id="BC079368">
    <property type="protein sequence ID" value="AAH79368.1"/>
    <property type="molecule type" value="mRNA"/>
</dbReference>
<dbReference type="RefSeq" id="NP_001004261.1">
    <property type="nucleotide sequence ID" value="NM_001004261.1"/>
</dbReference>
<dbReference type="SMR" id="Q68FT3"/>
<dbReference type="FunCoup" id="Q68FT3">
    <property type="interactions" value="196"/>
</dbReference>
<dbReference type="STRING" id="10116.ENSRNOP00000021257"/>
<dbReference type="iPTMnet" id="Q68FT3"/>
<dbReference type="PhosphoSitePlus" id="Q68FT3"/>
<dbReference type="PaxDb" id="10116-ENSRNOP00000021257"/>
<dbReference type="GeneID" id="309381"/>
<dbReference type="KEGG" id="rno:309381"/>
<dbReference type="UCSC" id="RGD:1303232">
    <property type="organism name" value="rat"/>
</dbReference>
<dbReference type="AGR" id="RGD:1303232"/>
<dbReference type="CTD" id="84795"/>
<dbReference type="RGD" id="1303232">
    <property type="gene designation" value="Pyroxd2"/>
</dbReference>
<dbReference type="VEuPathDB" id="HostDB:ENSRNOG00000015807"/>
<dbReference type="eggNOG" id="KOG4254">
    <property type="taxonomic scope" value="Eukaryota"/>
</dbReference>
<dbReference type="HOGENOM" id="CLU_019327_0_0_1"/>
<dbReference type="InParanoid" id="Q68FT3"/>
<dbReference type="PhylomeDB" id="Q68FT3"/>
<dbReference type="TreeFam" id="TF315188"/>
<dbReference type="PRO" id="PR:Q68FT3"/>
<dbReference type="Proteomes" id="UP000002494">
    <property type="component" value="Chromosome 1"/>
</dbReference>
<dbReference type="Bgee" id="ENSRNOG00000015807">
    <property type="expression patterns" value="Expressed in adult mammalian kidney and 18 other cell types or tissues"/>
</dbReference>
<dbReference type="GO" id="GO:0005759">
    <property type="term" value="C:mitochondrial matrix"/>
    <property type="evidence" value="ECO:0000250"/>
    <property type="project" value="UniProtKB"/>
</dbReference>
<dbReference type="GO" id="GO:0016491">
    <property type="term" value="F:oxidoreductase activity"/>
    <property type="evidence" value="ECO:0007669"/>
    <property type="project" value="UniProtKB-KW"/>
</dbReference>
<dbReference type="GO" id="GO:0007005">
    <property type="term" value="P:mitochondrion organization"/>
    <property type="evidence" value="ECO:0000250"/>
    <property type="project" value="UniProtKB"/>
</dbReference>
<dbReference type="Gene3D" id="3.50.50.60">
    <property type="entry name" value="FAD/NAD(P)-binding domain"/>
    <property type="match status" value="2"/>
</dbReference>
<dbReference type="InterPro" id="IPR002937">
    <property type="entry name" value="Amino_oxidase"/>
</dbReference>
<dbReference type="InterPro" id="IPR036188">
    <property type="entry name" value="FAD/NAD-bd_sf"/>
</dbReference>
<dbReference type="PANTHER" id="PTHR10668">
    <property type="entry name" value="PHYTOENE DEHYDROGENASE"/>
    <property type="match status" value="1"/>
</dbReference>
<dbReference type="PANTHER" id="PTHR10668:SF103">
    <property type="entry name" value="PYRIDINE NUCLEOTIDE-DISULFIDE OXIDOREDUCTASE DOMAIN-CONTAINING PROTEIN 2"/>
    <property type="match status" value="1"/>
</dbReference>
<dbReference type="Pfam" id="PF01593">
    <property type="entry name" value="Amino_oxidase"/>
    <property type="match status" value="1"/>
</dbReference>
<dbReference type="SUPFAM" id="SSF51905">
    <property type="entry name" value="FAD/NAD(P)-binding domain"/>
    <property type="match status" value="1"/>
</dbReference>
<evidence type="ECO:0000250" key="1">
    <source>
        <dbReference type="UniProtKB" id="Q8N2H3"/>
    </source>
</evidence>
<evidence type="ECO:0000255" key="2"/>
<evidence type="ECO:0000305" key="3"/>
<evidence type="ECO:0000312" key="4">
    <source>
        <dbReference type="RGD" id="1303232"/>
    </source>
</evidence>
<protein>
    <recommendedName>
        <fullName evidence="3">Pyridine nucleotide-disulfide oxidoreductase domain-containing protein 2</fullName>
        <ecNumber>1.-.-.-</ecNumber>
    </recommendedName>
</protein>
<feature type="chain" id="PRO_0000244074" description="Pyridine nucleotide-disulfide oxidoreductase domain-containing protein 2">
    <location>
        <begin position="1"/>
        <end position="581"/>
    </location>
</feature>
<feature type="binding site" evidence="2">
    <location>
        <begin position="38"/>
        <end position="71"/>
    </location>
    <ligand>
        <name>FAD</name>
        <dbReference type="ChEBI" id="CHEBI:57692"/>
    </ligand>
</feature>
<reference key="1">
    <citation type="journal article" date="2004" name="Genome Res.">
        <title>The status, quality, and expansion of the NIH full-length cDNA project: the Mammalian Gene Collection (MGC).</title>
        <authorList>
            <consortium name="The MGC Project Team"/>
        </authorList>
    </citation>
    <scope>NUCLEOTIDE SEQUENCE [LARGE SCALE MRNA]</scope>
    <source>
        <tissue>Kidney</tissue>
    </source>
</reference>
<gene>
    <name evidence="4" type="primary">Pyroxd2</name>
</gene>
<name>PYRD2_RAT</name>
<comment type="function">
    <text evidence="1">Probable oxidoreductase that may play a role as regulator of mitochondrial function.</text>
</comment>
<comment type="subunit">
    <text evidence="1">Interacts with COX5B; this interaction may contribute to localize PYROXD2 to the inner face of the inner mitochondrial membrane.</text>
</comment>
<comment type="subcellular location">
    <subcellularLocation>
        <location evidence="1">Mitochondrion matrix</location>
    </subcellularLocation>
    <text evidence="1">The import into mitochondria is dependent on TOMM40 and TIMM23.</text>
</comment>
<comment type="similarity">
    <text evidence="3">Belongs to the carotenoid/retinoid oxidoreductase family.</text>
</comment>
<organism>
    <name type="scientific">Rattus norvegicus</name>
    <name type="common">Rat</name>
    <dbReference type="NCBI Taxonomy" id="10116"/>
    <lineage>
        <taxon>Eukaryota</taxon>
        <taxon>Metazoa</taxon>
        <taxon>Chordata</taxon>
        <taxon>Craniata</taxon>
        <taxon>Vertebrata</taxon>
        <taxon>Euteleostomi</taxon>
        <taxon>Mammalia</taxon>
        <taxon>Eutheria</taxon>
        <taxon>Euarchontoglires</taxon>
        <taxon>Glires</taxon>
        <taxon>Rodentia</taxon>
        <taxon>Myomorpha</taxon>
        <taxon>Muroidea</taxon>
        <taxon>Muridae</taxon>
        <taxon>Murinae</taxon>
        <taxon>Rattus</taxon>
    </lineage>
</organism>
<sequence length="581" mass="62879">MAASGRGLSRALHSTPCPAWKRVQSGANGCLKPEYDAVVIGAGHNGLVAAAYLQRLGVNTAVFERRHVIGGAAVTEEIIPGFKFSRASYLLSLLRPQIYTDLELKKHGLKLHLRNPYSFTPMLEEGTLSKPPRSLLLGTDVAENQKQISQFSRKDAQAFPRYEEFMKRLVLAIDPLLDAAPVDIAALQHGSLLQRLRALSTLRPLLKAGRTLGAQLPQYYEVLTAPISKVLDQWFESEPLKATLATDAVIGAMTSPHTPGSGYVLLHHVMGSLEGMQGAWSYVQGGMGALSDAIASSATAHGASIFTEKTVAKVQVNSEGRVQGVVLQGGEEVRSRVVLSCASPQVTFLELTPQEWLPGAFVKRISQLDTQSPVTKINVAVDRLPNFQAAPNAPGDQPQAHHQCSIHLNCEDTLLLHQAFEDAKGGLPSQRPMIELCIPSSLDPTLAPTGCHVVSLFTQYTPYTLAGGKVWDEQKKNTYADKVFDCIEAYAPGFKRSVLGRDILTPQDLERIFGLPGGNIFHGAMSLDQLYFARPVPQHSDYRCPVQGLYLCGSGAHPGGGVMGAAGRNAAHIVFRDLKNM</sequence>
<proteinExistence type="evidence at transcript level"/>